<proteinExistence type="evidence at transcript level"/>
<dbReference type="EMBL" id="AK092806">
    <property type="protein sequence ID" value="BAC03979.1"/>
    <property type="molecule type" value="mRNA"/>
</dbReference>
<dbReference type="BioMuta" id="HGNC:26647"/>
<dbReference type="AGR" id="HGNC:26647"/>
<dbReference type="GeneCards" id="LINC01555"/>
<dbReference type="HGNC" id="HGNC:26647">
    <property type="gene designation" value="LINC01555"/>
</dbReference>
<dbReference type="neXtProt" id="NX_Q8NAE3"/>
<dbReference type="InParanoid" id="Q8NAE3"/>
<dbReference type="PAN-GO" id="Q8NAE3">
    <property type="GO annotations" value="0 GO annotations based on evolutionary models"/>
</dbReference>
<dbReference type="PhylomeDB" id="Q8NAE3"/>
<dbReference type="PathwayCommons" id="Q8NAE3"/>
<dbReference type="SignaLink" id="Q8NAE3"/>
<dbReference type="Pharos" id="Q8NAE3">
    <property type="development level" value="Tdark"/>
</dbReference>
<dbReference type="PRO" id="PR:Q8NAE3"/>
<dbReference type="Proteomes" id="UP000005640">
    <property type="component" value="Unplaced"/>
</dbReference>
<dbReference type="RNAct" id="Q8NAE3">
    <property type="molecule type" value="protein"/>
</dbReference>
<name>CA180_HUMAN</name>
<reference key="1">
    <citation type="journal article" date="2004" name="Nat. Genet.">
        <title>Complete sequencing and characterization of 21,243 full-length human cDNAs.</title>
        <authorList>
            <person name="Ota T."/>
            <person name="Suzuki Y."/>
            <person name="Nishikawa T."/>
            <person name="Otsuki T."/>
            <person name="Sugiyama T."/>
            <person name="Irie R."/>
            <person name="Wakamatsu A."/>
            <person name="Hayashi K."/>
            <person name="Sato H."/>
            <person name="Nagai K."/>
            <person name="Kimura K."/>
            <person name="Makita H."/>
            <person name="Sekine M."/>
            <person name="Obayashi M."/>
            <person name="Nishi T."/>
            <person name="Shibahara T."/>
            <person name="Tanaka T."/>
            <person name="Ishii S."/>
            <person name="Yamamoto J."/>
            <person name="Saito K."/>
            <person name="Kawai Y."/>
            <person name="Isono Y."/>
            <person name="Nakamura Y."/>
            <person name="Nagahari K."/>
            <person name="Murakami K."/>
            <person name="Yasuda T."/>
            <person name="Iwayanagi T."/>
            <person name="Wagatsuma M."/>
            <person name="Shiratori A."/>
            <person name="Sudo H."/>
            <person name="Hosoiri T."/>
            <person name="Kaku Y."/>
            <person name="Kodaira H."/>
            <person name="Kondo H."/>
            <person name="Sugawara M."/>
            <person name="Takahashi M."/>
            <person name="Kanda K."/>
            <person name="Yokoi T."/>
            <person name="Furuya T."/>
            <person name="Kikkawa E."/>
            <person name="Omura Y."/>
            <person name="Abe K."/>
            <person name="Kamihara K."/>
            <person name="Katsuta N."/>
            <person name="Sato K."/>
            <person name="Tanikawa M."/>
            <person name="Yamazaki M."/>
            <person name="Ninomiya K."/>
            <person name="Ishibashi T."/>
            <person name="Yamashita H."/>
            <person name="Murakawa K."/>
            <person name="Fujimori K."/>
            <person name="Tanai H."/>
            <person name="Kimata M."/>
            <person name="Watanabe M."/>
            <person name="Hiraoka S."/>
            <person name="Chiba Y."/>
            <person name="Ishida S."/>
            <person name="Ono Y."/>
            <person name="Takiguchi S."/>
            <person name="Watanabe S."/>
            <person name="Yosida M."/>
            <person name="Hotuta T."/>
            <person name="Kusano J."/>
            <person name="Kanehori K."/>
            <person name="Takahashi-Fujii A."/>
            <person name="Hara H."/>
            <person name="Tanase T.-O."/>
            <person name="Nomura Y."/>
            <person name="Togiya S."/>
            <person name="Komai F."/>
            <person name="Hara R."/>
            <person name="Takeuchi K."/>
            <person name="Arita M."/>
            <person name="Imose N."/>
            <person name="Musashino K."/>
            <person name="Yuuki H."/>
            <person name="Oshima A."/>
            <person name="Sasaki N."/>
            <person name="Aotsuka S."/>
            <person name="Yoshikawa Y."/>
            <person name="Matsunawa H."/>
            <person name="Ichihara T."/>
            <person name="Shiohata N."/>
            <person name="Sano S."/>
            <person name="Moriya S."/>
            <person name="Momiyama H."/>
            <person name="Satoh N."/>
            <person name="Takami S."/>
            <person name="Terashima Y."/>
            <person name="Suzuki O."/>
            <person name="Nakagawa S."/>
            <person name="Senoh A."/>
            <person name="Mizoguchi H."/>
            <person name="Goto Y."/>
            <person name="Shimizu F."/>
            <person name="Wakebe H."/>
            <person name="Hishigaki H."/>
            <person name="Watanabe T."/>
            <person name="Sugiyama A."/>
            <person name="Takemoto M."/>
            <person name="Kawakami B."/>
            <person name="Yamazaki M."/>
            <person name="Watanabe K."/>
            <person name="Kumagai A."/>
            <person name="Itakura S."/>
            <person name="Fukuzumi Y."/>
            <person name="Fujimori Y."/>
            <person name="Komiyama M."/>
            <person name="Tashiro H."/>
            <person name="Tanigami A."/>
            <person name="Fujiwara T."/>
            <person name="Ono T."/>
            <person name="Yamada K."/>
            <person name="Fujii Y."/>
            <person name="Ozaki K."/>
            <person name="Hirao M."/>
            <person name="Ohmori Y."/>
            <person name="Kawabata A."/>
            <person name="Hikiji T."/>
            <person name="Kobatake N."/>
            <person name="Inagaki H."/>
            <person name="Ikema Y."/>
            <person name="Okamoto S."/>
            <person name="Okitani R."/>
            <person name="Kawakami T."/>
            <person name="Noguchi S."/>
            <person name="Itoh T."/>
            <person name="Shigeta K."/>
            <person name="Senba T."/>
            <person name="Matsumura K."/>
            <person name="Nakajima Y."/>
            <person name="Mizuno T."/>
            <person name="Morinaga M."/>
            <person name="Sasaki M."/>
            <person name="Togashi T."/>
            <person name="Oyama M."/>
            <person name="Hata H."/>
            <person name="Watanabe M."/>
            <person name="Komatsu T."/>
            <person name="Mizushima-Sugano J."/>
            <person name="Satoh T."/>
            <person name="Shirai Y."/>
            <person name="Takahashi Y."/>
            <person name="Nakagawa K."/>
            <person name="Okumura K."/>
            <person name="Nagase T."/>
            <person name="Nomura N."/>
            <person name="Kikuchi H."/>
            <person name="Masuho Y."/>
            <person name="Yamashita R."/>
            <person name="Nakai K."/>
            <person name="Yada T."/>
            <person name="Nakamura Y."/>
            <person name="Ohara O."/>
            <person name="Isogai T."/>
            <person name="Sugano S."/>
        </authorList>
    </citation>
    <scope>NUCLEOTIDE SEQUENCE [LARGE SCALE MRNA]</scope>
    <source>
        <tissue>Small intestine</tissue>
    </source>
</reference>
<keyword id="KW-1185">Reference proteome</keyword>
<evidence type="ECO:0000312" key="1">
    <source>
        <dbReference type="HGNC" id="HGNC:26647"/>
    </source>
</evidence>
<organism>
    <name type="scientific">Homo sapiens</name>
    <name type="common">Human</name>
    <dbReference type="NCBI Taxonomy" id="9606"/>
    <lineage>
        <taxon>Eukaryota</taxon>
        <taxon>Metazoa</taxon>
        <taxon>Chordata</taxon>
        <taxon>Craniata</taxon>
        <taxon>Vertebrata</taxon>
        <taxon>Euteleostomi</taxon>
        <taxon>Mammalia</taxon>
        <taxon>Eutheria</taxon>
        <taxon>Euarchontoglires</taxon>
        <taxon>Primates</taxon>
        <taxon>Haplorrhini</taxon>
        <taxon>Catarrhini</taxon>
        <taxon>Hominidae</taxon>
        <taxon>Homo</taxon>
    </lineage>
</organism>
<feature type="chain" id="PRO_0000271061" description="Putative uncharacterized protein encoded by LINC01555">
    <location>
        <begin position="1"/>
        <end position="123"/>
    </location>
</feature>
<feature type="sequence variant" id="VAR_029856" description="In dbSNP:rs4551616.">
    <original>F</original>
    <variation>V</variation>
    <location>
        <position position="96"/>
    </location>
</feature>
<gene>
    <name evidence="1" type="primary">LINC01555</name>
    <name evidence="1" type="synonym">C1orf180</name>
</gene>
<sequence length="123" mass="13125">MLGPNAQVTVVVAQPGPDHLDHLLLDTQHCQHSSCGSAACTQLTWVPCLGGSHKASIKMSAQAVVSTEAPWERPCFQAHLGCLQNSVLCSCRMEGFSLFLAMLWGGVGELPSDPRGHLQFLAT</sequence>
<protein>
    <recommendedName>
        <fullName evidence="1">Putative uncharacterized protein encoded by LINC01555</fullName>
    </recommendedName>
</protein>
<accession>Q8NAE3</accession>